<reference key="1">
    <citation type="journal article" date="1996" name="J. Cell Sci.">
        <title>Porcine aortic endothelial gap junctions: identification and permeation by caged InsP3.</title>
        <authorList>
            <person name="Carter T.D."/>
            <person name="Cen X.Y."/>
            <person name="Carlile G."/>
            <person name="Kalapothakis E."/>
            <person name="Ogden D."/>
            <person name="Evans W.H."/>
        </authorList>
    </citation>
    <scope>NUCLEOTIDE SEQUENCE [MRNA]</scope>
    <source>
        <strain>Large white X Duroc</strain>
        <tissue>Aortic endothelium</tissue>
    </source>
</reference>
<keyword id="KW-0965">Cell junction</keyword>
<keyword id="KW-1003">Cell membrane</keyword>
<keyword id="KW-0303">Gap junction</keyword>
<keyword id="KW-0472">Membrane</keyword>
<keyword id="KW-1185">Reference proteome</keyword>
<keyword id="KW-0812">Transmembrane</keyword>
<keyword id="KW-1133">Transmembrane helix</keyword>
<sequence>DWGFLEKLLDQVQEHSTVVGKIWLTVLFIFRILILGLAGESVWGDEQSDFECNTAQPGCTNVCYDQAFPISHIPYWVLQFLFVSTPTLVYLGHVIYLSRREERLRQKEGELRALPDKDPRVERALAGIERQMAKISVA</sequence>
<name>CXA4_PIG</name>
<organism>
    <name type="scientific">Sus scrofa</name>
    <name type="common">Pig</name>
    <dbReference type="NCBI Taxonomy" id="9823"/>
    <lineage>
        <taxon>Eukaryota</taxon>
        <taxon>Metazoa</taxon>
        <taxon>Chordata</taxon>
        <taxon>Craniata</taxon>
        <taxon>Vertebrata</taxon>
        <taxon>Euteleostomi</taxon>
        <taxon>Mammalia</taxon>
        <taxon>Eutheria</taxon>
        <taxon>Laurasiatheria</taxon>
        <taxon>Artiodactyla</taxon>
        <taxon>Suina</taxon>
        <taxon>Suidae</taxon>
        <taxon>Sus</taxon>
    </lineage>
</organism>
<gene>
    <name type="primary">GJA4</name>
</gene>
<feature type="chain" id="PRO_0000057816" description="Gap junction alpha-4 protein">
    <location>
        <begin position="1" status="less than"/>
        <end position="138" status="greater than"/>
    </location>
</feature>
<feature type="topological domain" description="Cytoplasmic" evidence="1">
    <location>
        <begin position="1" status="less than"/>
        <end position="16"/>
    </location>
</feature>
<feature type="transmembrane region" description="Helical" evidence="1">
    <location>
        <begin position="17"/>
        <end position="39"/>
    </location>
</feature>
<feature type="topological domain" description="Extracellular" evidence="1">
    <location>
        <begin position="40"/>
        <end position="74"/>
    </location>
</feature>
<feature type="transmembrane region" description="Helical" evidence="1">
    <location>
        <begin position="75"/>
        <end position="97"/>
    </location>
</feature>
<feature type="topological domain" description="Cytoplasmic" evidence="1">
    <location>
        <begin position="98"/>
        <end position="138" status="greater than"/>
    </location>
</feature>
<feature type="non-terminal residue">
    <location>
        <position position="1"/>
    </location>
</feature>
<feature type="non-terminal residue">
    <location>
        <position position="138"/>
    </location>
</feature>
<protein>
    <recommendedName>
        <fullName>Gap junction alpha-4 protein</fullName>
    </recommendedName>
    <alternativeName>
        <fullName>Connexin-37</fullName>
        <shortName>Cx37</shortName>
    </alternativeName>
</protein>
<accession>Q29559</accession>
<dbReference type="EMBL" id="X86024">
    <property type="protein sequence ID" value="CAA60019.1"/>
    <property type="molecule type" value="mRNA"/>
</dbReference>
<dbReference type="SMR" id="Q29559"/>
<dbReference type="STRING" id="9823.ENSSSCP00000066969"/>
<dbReference type="InParanoid" id="Q29559"/>
<dbReference type="Proteomes" id="UP000008227">
    <property type="component" value="Unplaced"/>
</dbReference>
<dbReference type="Proteomes" id="UP000314985">
    <property type="component" value="Unplaced"/>
</dbReference>
<dbReference type="Proteomes" id="UP000694570">
    <property type="component" value="Unplaced"/>
</dbReference>
<dbReference type="Proteomes" id="UP000694571">
    <property type="component" value="Unplaced"/>
</dbReference>
<dbReference type="Proteomes" id="UP000694720">
    <property type="component" value="Unplaced"/>
</dbReference>
<dbReference type="Proteomes" id="UP000694722">
    <property type="component" value="Unplaced"/>
</dbReference>
<dbReference type="Proteomes" id="UP000694723">
    <property type="component" value="Unplaced"/>
</dbReference>
<dbReference type="Proteomes" id="UP000694724">
    <property type="component" value="Unplaced"/>
</dbReference>
<dbReference type="Proteomes" id="UP000694725">
    <property type="component" value="Unplaced"/>
</dbReference>
<dbReference type="Proteomes" id="UP000694726">
    <property type="component" value="Unplaced"/>
</dbReference>
<dbReference type="Proteomes" id="UP000694727">
    <property type="component" value="Unplaced"/>
</dbReference>
<dbReference type="Proteomes" id="UP000694728">
    <property type="component" value="Unplaced"/>
</dbReference>
<dbReference type="GO" id="GO:0005922">
    <property type="term" value="C:connexin complex"/>
    <property type="evidence" value="ECO:0007669"/>
    <property type="project" value="InterPro"/>
</dbReference>
<dbReference type="GO" id="GO:0007154">
    <property type="term" value="P:cell communication"/>
    <property type="evidence" value="ECO:0007669"/>
    <property type="project" value="InterPro"/>
</dbReference>
<dbReference type="Gene3D" id="1.20.1440.80">
    <property type="entry name" value="Gap junction channel protein cysteine-rich domain"/>
    <property type="match status" value="1"/>
</dbReference>
<dbReference type="InterPro" id="IPR000500">
    <property type="entry name" value="Connexin"/>
</dbReference>
<dbReference type="InterPro" id="IPR017990">
    <property type="entry name" value="Connexin_CS"/>
</dbReference>
<dbReference type="InterPro" id="IPR013092">
    <property type="entry name" value="Connexin_N"/>
</dbReference>
<dbReference type="InterPro" id="IPR038359">
    <property type="entry name" value="Connexin_N_sf"/>
</dbReference>
<dbReference type="PANTHER" id="PTHR11984">
    <property type="entry name" value="CONNEXIN"/>
    <property type="match status" value="1"/>
</dbReference>
<dbReference type="PANTHER" id="PTHR11984:SF54">
    <property type="entry name" value="GAP JUNCTION ALPHA-4 PROTEIN"/>
    <property type="match status" value="1"/>
</dbReference>
<dbReference type="Pfam" id="PF00029">
    <property type="entry name" value="Connexin"/>
    <property type="match status" value="1"/>
</dbReference>
<dbReference type="PRINTS" id="PR00206">
    <property type="entry name" value="CONNEXIN"/>
</dbReference>
<dbReference type="SMART" id="SM00037">
    <property type="entry name" value="CNX"/>
    <property type="match status" value="1"/>
</dbReference>
<dbReference type="PROSITE" id="PS00407">
    <property type="entry name" value="CONNEXINS_1"/>
    <property type="match status" value="1"/>
</dbReference>
<evidence type="ECO:0000255" key="1"/>
<evidence type="ECO:0000305" key="2"/>
<comment type="function">
    <text>One gap junction consists of a cluster of closely packed pairs of transmembrane channels, the connexons, through which materials of low MW diffuse from one cell to a neighboring cell.</text>
</comment>
<comment type="subunit">
    <text>A connexon is composed of a hexamer of connexins.</text>
</comment>
<comment type="subcellular location">
    <subcellularLocation>
        <location>Cell membrane</location>
        <topology>Multi-pass membrane protein</topology>
    </subcellularLocation>
    <subcellularLocation>
        <location>Cell junction</location>
        <location>Gap junction</location>
    </subcellularLocation>
</comment>
<comment type="similarity">
    <text evidence="2">Belongs to the connexin family. Alpha-type (group II) subfamily.</text>
</comment>
<proteinExistence type="evidence at transcript level"/>